<gene>
    <name type="primary">rdxA</name>
    <name type="ordered locus">RHOS4_30740</name>
    <name type="ORF">RSP_3027</name>
</gene>
<dbReference type="EMBL" id="M94725">
    <property type="protein sequence ID" value="AAA26117.1"/>
    <property type="molecule type" value="Genomic_DNA"/>
</dbReference>
<dbReference type="EMBL" id="CP000144">
    <property type="protein sequence ID" value="ABA80642.1"/>
    <property type="molecule type" value="Genomic_DNA"/>
</dbReference>
<dbReference type="PIR" id="A45728">
    <property type="entry name" value="A45728"/>
</dbReference>
<dbReference type="RefSeq" id="WP_011338980.1">
    <property type="nucleotide sequence ID" value="NC_007494.2"/>
</dbReference>
<dbReference type="RefSeq" id="YP_354543.1">
    <property type="nucleotide sequence ID" value="NC_007494.2"/>
</dbReference>
<dbReference type="SMR" id="Q01854"/>
<dbReference type="STRING" id="272943.RSP_3027"/>
<dbReference type="EnsemblBacteria" id="ABA80642">
    <property type="protein sequence ID" value="ABA80642"/>
    <property type="gene ID" value="RSP_3027"/>
</dbReference>
<dbReference type="GeneID" id="3721612"/>
<dbReference type="KEGG" id="rsp:RSP_3027"/>
<dbReference type="PATRIC" id="fig|272943.9.peg.3444"/>
<dbReference type="eggNOG" id="COG0348">
    <property type="taxonomic scope" value="Bacteria"/>
</dbReference>
<dbReference type="OrthoDB" id="9811700at2"/>
<dbReference type="PhylomeDB" id="Q01854"/>
<dbReference type="Proteomes" id="UP000002703">
    <property type="component" value="Chromosome 2"/>
</dbReference>
<dbReference type="GO" id="GO:0005886">
    <property type="term" value="C:plasma membrane"/>
    <property type="evidence" value="ECO:0007669"/>
    <property type="project" value="UniProtKB-SubCell"/>
</dbReference>
<dbReference type="GO" id="GO:0051539">
    <property type="term" value="F:4 iron, 4 sulfur cluster binding"/>
    <property type="evidence" value="ECO:0007669"/>
    <property type="project" value="UniProtKB-KW"/>
</dbReference>
<dbReference type="GO" id="GO:0046872">
    <property type="term" value="F:metal ion binding"/>
    <property type="evidence" value="ECO:0007669"/>
    <property type="project" value="UniProtKB-KW"/>
</dbReference>
<dbReference type="Gene3D" id="2.60.40.10">
    <property type="entry name" value="Immunoglobulins"/>
    <property type="match status" value="1"/>
</dbReference>
<dbReference type="InterPro" id="IPR017896">
    <property type="entry name" value="4Fe4S_Fe-S-bd"/>
</dbReference>
<dbReference type="InterPro" id="IPR017900">
    <property type="entry name" value="4Fe4S_Fe_S_CS"/>
</dbReference>
<dbReference type="InterPro" id="IPR014116">
    <property type="entry name" value="Cyt_c_oxidase_cbb3_FixG"/>
</dbReference>
<dbReference type="InterPro" id="IPR051684">
    <property type="entry name" value="Electron_Trans/Redox"/>
</dbReference>
<dbReference type="InterPro" id="IPR032879">
    <property type="entry name" value="FixG_C"/>
</dbReference>
<dbReference type="InterPro" id="IPR013783">
    <property type="entry name" value="Ig-like_fold"/>
</dbReference>
<dbReference type="NCBIfam" id="TIGR02745">
    <property type="entry name" value="ccoG_rdxA_fixG"/>
    <property type="match status" value="1"/>
</dbReference>
<dbReference type="PANTHER" id="PTHR30176">
    <property type="entry name" value="FERREDOXIN-TYPE PROTEIN NAPH"/>
    <property type="match status" value="1"/>
</dbReference>
<dbReference type="PANTHER" id="PTHR30176:SF3">
    <property type="entry name" value="FERREDOXIN-TYPE PROTEIN NAPH"/>
    <property type="match status" value="1"/>
</dbReference>
<dbReference type="Pfam" id="PF13746">
    <property type="entry name" value="Fer4_18"/>
    <property type="match status" value="1"/>
</dbReference>
<dbReference type="Pfam" id="PF12801">
    <property type="entry name" value="Fer4_5"/>
    <property type="match status" value="1"/>
</dbReference>
<dbReference type="Pfam" id="PF11614">
    <property type="entry name" value="FixG_C"/>
    <property type="match status" value="1"/>
</dbReference>
<dbReference type="SUPFAM" id="SSF54862">
    <property type="entry name" value="4Fe-4S ferredoxins"/>
    <property type="match status" value="1"/>
</dbReference>
<dbReference type="PROSITE" id="PS00198">
    <property type="entry name" value="4FE4S_FER_1"/>
    <property type="match status" value="1"/>
</dbReference>
<dbReference type="PROSITE" id="PS51379">
    <property type="entry name" value="4FE4S_FER_2"/>
    <property type="match status" value="2"/>
</dbReference>
<accession>Q01854</accession>
<accession>Q3IXU2</accession>
<keyword id="KW-0004">4Fe-4S</keyword>
<keyword id="KW-1003">Cell membrane</keyword>
<keyword id="KW-0249">Electron transport</keyword>
<keyword id="KW-0408">Iron</keyword>
<keyword id="KW-0411">Iron-sulfur</keyword>
<keyword id="KW-0472">Membrane</keyword>
<keyword id="KW-0479">Metal-binding</keyword>
<keyword id="KW-1185">Reference proteome</keyword>
<keyword id="KW-0677">Repeat</keyword>
<keyword id="KW-0812">Transmembrane</keyword>
<keyword id="KW-1133">Transmembrane helix</keyword>
<keyword id="KW-0813">Transport</keyword>
<organism>
    <name type="scientific">Cereibacter sphaeroides (strain ATCC 17023 / DSM 158 / JCM 6121 / CCUG 31486 / LMG 2827 / NBRC 12203 / NCIMB 8253 / ATH 2.4.1.)</name>
    <name type="common">Rhodobacter sphaeroides</name>
    <dbReference type="NCBI Taxonomy" id="272943"/>
    <lineage>
        <taxon>Bacteria</taxon>
        <taxon>Pseudomonadati</taxon>
        <taxon>Pseudomonadota</taxon>
        <taxon>Alphaproteobacteria</taxon>
        <taxon>Rhodobacterales</taxon>
        <taxon>Paracoccaceae</taxon>
        <taxon>Cereibacter</taxon>
    </lineage>
</organism>
<sequence>MSEPLYAPRTPIFPRQISGAFRTAKWWILAVSLGIYLLTPWLRWDRGPNLPDQAVLIDIAGRRFFLFGIQIWPHEFYFVAGLLIMAGLGLFLFTSAAGRVWCGYACPQTVWTDLFLLVERRIEGDRNAQIRLHRQAWTAEKVWKRLLKWSVWAAISLLTGGAWVFYFADAPTLLNGLVTLTAHPVAWITIFVLTATTFVFAGFMREQICIYACPWPRIQAALMDEETITVAYRDWRGEPRGKRSETGRGDCIDCMACVNVCPMGIDIREGQQMACITCGLCIDACDDTMDRIGRPRGLIGYLALSDEHLERAGDTPKPAWRRLFRLRTSLYAVLWAGVGVTLIAALLLRPAVDLAVTPVRNPLFVTLSDGSIRNAYELRLRNMSGEDRRFRLAVDGSAGLRPSIEGSAGLDVPVAANATGLVRLYLTAPQGSDPATGALTDLRIRLDDAGGPEGGPVAAVKAAFHGARS</sequence>
<proteinExistence type="predicted"/>
<reference key="1">
    <citation type="journal article" date="1992" name="J. Bacteriol.">
        <title>Rhodobacter sphaeroides rdxA, a homolog of Rhizobium meliloti fixG, encodes a membrane protein which may bind cytoplasmic [4Fe-4S] clusters.</title>
        <authorList>
            <person name="Neidle E.L."/>
            <person name="Kaplan S."/>
        </authorList>
    </citation>
    <scope>NUCLEOTIDE SEQUENCE [GENOMIC DNA]</scope>
</reference>
<reference key="2">
    <citation type="submission" date="2005-09" db="EMBL/GenBank/DDBJ databases">
        <title>Complete sequence of chromosome 2 of Rhodobacter sphaeroides 2.4.1.</title>
        <authorList>
            <person name="Copeland A."/>
            <person name="Lucas S."/>
            <person name="Lapidus A."/>
            <person name="Barry K."/>
            <person name="Detter J.C."/>
            <person name="Glavina T."/>
            <person name="Hammon N."/>
            <person name="Israni S."/>
            <person name="Pitluck S."/>
            <person name="Richardson P."/>
            <person name="Mackenzie C."/>
            <person name="Choudhary M."/>
            <person name="Larimer F."/>
            <person name="Hauser L.J."/>
            <person name="Land M."/>
            <person name="Donohue T.J."/>
            <person name="Kaplan S."/>
        </authorList>
    </citation>
    <scope>NUCLEOTIDE SEQUENCE [LARGE SCALE GENOMIC DNA]</scope>
    <source>
        <strain>ATCC 17023 / DSM 158 / JCM 6121 / CCUG 31486 / LMG 2827 / NBRC 12203 / NCIMB 8253 / ATH 2.4.1.</strain>
    </source>
</reference>
<comment type="function">
    <text>Predicted to be involved in a redox process.</text>
</comment>
<comment type="subcellular location">
    <subcellularLocation>
        <location>Cell membrane</location>
        <topology>Multi-pass membrane protein</topology>
    </subcellularLocation>
</comment>
<protein>
    <recommendedName>
        <fullName>Protein RdxA</fullName>
    </recommendedName>
</protein>
<feature type="chain" id="PRO_0000159237" description="Protein RdxA">
    <location>
        <begin position="1"/>
        <end position="469"/>
    </location>
</feature>
<feature type="topological domain" description="Cytoplasmic" evidence="2">
    <location>
        <begin position="1"/>
        <end position="23"/>
    </location>
</feature>
<feature type="transmembrane region" description="Helical" evidence="2">
    <location>
        <begin position="24"/>
        <end position="44"/>
    </location>
</feature>
<feature type="topological domain" description="Periplasmic" evidence="2">
    <location>
        <begin position="45"/>
        <end position="75"/>
    </location>
</feature>
<feature type="transmembrane region" description="Helical" evidence="2">
    <location>
        <begin position="76"/>
        <end position="96"/>
    </location>
</feature>
<feature type="topological domain" description="Cytoplasmic" evidence="2">
    <location>
        <begin position="97"/>
        <end position="149"/>
    </location>
</feature>
<feature type="transmembrane region" description="Helical" evidence="2">
    <location>
        <begin position="150"/>
        <end position="170"/>
    </location>
</feature>
<feature type="topological domain" description="Periplasmic" evidence="2">
    <location>
        <begin position="171"/>
        <end position="183"/>
    </location>
</feature>
<feature type="transmembrane region" description="Helical" evidence="2">
    <location>
        <begin position="184"/>
        <end position="204"/>
    </location>
</feature>
<feature type="topological domain" description="Cytoplasmic" evidence="2">
    <location>
        <begin position="205"/>
        <end position="327"/>
    </location>
</feature>
<feature type="transmembrane region" description="Helical" evidence="2">
    <location>
        <begin position="328"/>
        <end position="348"/>
    </location>
</feature>
<feature type="topological domain" description="Periplasmic" evidence="2">
    <location>
        <begin position="349"/>
        <end position="469"/>
    </location>
</feature>
<feature type="domain" description="4Fe-4S ferredoxin-type 1" evidence="3">
    <location>
        <begin position="242"/>
        <end position="270"/>
    </location>
</feature>
<feature type="domain" description="4Fe-4S ferredoxin-type 2" evidence="3">
    <location>
        <begin position="266"/>
        <end position="295"/>
    </location>
</feature>
<feature type="binding site" evidence="1">
    <location>
        <position position="251"/>
    </location>
    <ligand>
        <name>[4Fe-4S] cluster</name>
        <dbReference type="ChEBI" id="CHEBI:49883"/>
        <label>1</label>
    </ligand>
</feature>
<feature type="binding site" evidence="1">
    <location>
        <position position="254"/>
    </location>
    <ligand>
        <name>[4Fe-4S] cluster</name>
        <dbReference type="ChEBI" id="CHEBI:49883"/>
        <label>1</label>
    </ligand>
</feature>
<feature type="binding site" evidence="1">
    <location>
        <position position="257"/>
    </location>
    <ligand>
        <name>[4Fe-4S] cluster</name>
        <dbReference type="ChEBI" id="CHEBI:49883"/>
        <label>1</label>
    </ligand>
</feature>
<feature type="binding site" evidence="1">
    <location>
        <position position="261"/>
    </location>
    <ligand>
        <name>[4Fe-4S] cluster</name>
        <dbReference type="ChEBI" id="CHEBI:49883"/>
        <label>2</label>
    </ligand>
</feature>
<feature type="binding site" evidence="1">
    <location>
        <position position="275"/>
    </location>
    <ligand>
        <name>[4Fe-4S] cluster</name>
        <dbReference type="ChEBI" id="CHEBI:49883"/>
        <label>2</label>
    </ligand>
</feature>
<feature type="binding site" evidence="1">
    <location>
        <position position="278"/>
    </location>
    <ligand>
        <name>[4Fe-4S] cluster</name>
        <dbReference type="ChEBI" id="CHEBI:49883"/>
        <label>2</label>
    </ligand>
</feature>
<feature type="binding site" evidence="1">
    <location>
        <position position="281"/>
    </location>
    <ligand>
        <name>[4Fe-4S] cluster</name>
        <dbReference type="ChEBI" id="CHEBI:49883"/>
        <label>2</label>
    </ligand>
</feature>
<feature type="binding site" evidence="1">
    <location>
        <position position="285"/>
    </location>
    <ligand>
        <name>[4Fe-4S] cluster</name>
        <dbReference type="ChEBI" id="CHEBI:49883"/>
        <label>1</label>
    </ligand>
</feature>
<evidence type="ECO:0000250" key="1"/>
<evidence type="ECO:0000255" key="2"/>
<evidence type="ECO:0000255" key="3">
    <source>
        <dbReference type="PROSITE-ProRule" id="PRU00711"/>
    </source>
</evidence>
<name>RDXA_CERS4</name>